<dbReference type="EC" id="3.1.26.5" evidence="1"/>
<dbReference type="EMBL" id="CU928163">
    <property type="protein sequence ID" value="CAR15375.1"/>
    <property type="molecule type" value="Genomic_DNA"/>
</dbReference>
<dbReference type="RefSeq" id="WP_000239730.1">
    <property type="nucleotide sequence ID" value="NC_011751.1"/>
</dbReference>
<dbReference type="RefSeq" id="YP_002414869.1">
    <property type="nucleotide sequence ID" value="NC_011751.1"/>
</dbReference>
<dbReference type="SMR" id="B7NF21"/>
<dbReference type="STRING" id="585056.ECUMN_4235"/>
<dbReference type="GeneID" id="93778446"/>
<dbReference type="KEGG" id="eum:ECUMN_4235"/>
<dbReference type="PATRIC" id="fig|585056.7.peg.4407"/>
<dbReference type="HOGENOM" id="CLU_117179_11_0_6"/>
<dbReference type="Proteomes" id="UP000007097">
    <property type="component" value="Chromosome"/>
</dbReference>
<dbReference type="GO" id="GO:0030677">
    <property type="term" value="C:ribonuclease P complex"/>
    <property type="evidence" value="ECO:0007669"/>
    <property type="project" value="TreeGrafter"/>
</dbReference>
<dbReference type="GO" id="GO:0042781">
    <property type="term" value="F:3'-tRNA processing endoribonuclease activity"/>
    <property type="evidence" value="ECO:0007669"/>
    <property type="project" value="TreeGrafter"/>
</dbReference>
<dbReference type="GO" id="GO:0004526">
    <property type="term" value="F:ribonuclease P activity"/>
    <property type="evidence" value="ECO:0007669"/>
    <property type="project" value="UniProtKB-UniRule"/>
</dbReference>
<dbReference type="GO" id="GO:0000049">
    <property type="term" value="F:tRNA binding"/>
    <property type="evidence" value="ECO:0007669"/>
    <property type="project" value="UniProtKB-UniRule"/>
</dbReference>
<dbReference type="GO" id="GO:0001682">
    <property type="term" value="P:tRNA 5'-leader removal"/>
    <property type="evidence" value="ECO:0007669"/>
    <property type="project" value="UniProtKB-UniRule"/>
</dbReference>
<dbReference type="FunFam" id="3.30.230.10:FF:000016">
    <property type="entry name" value="Ribonuclease P protein component"/>
    <property type="match status" value="1"/>
</dbReference>
<dbReference type="Gene3D" id="3.30.230.10">
    <property type="match status" value="1"/>
</dbReference>
<dbReference type="HAMAP" id="MF_00227">
    <property type="entry name" value="RNase_P"/>
    <property type="match status" value="1"/>
</dbReference>
<dbReference type="InterPro" id="IPR020568">
    <property type="entry name" value="Ribosomal_Su5_D2-typ_SF"/>
</dbReference>
<dbReference type="InterPro" id="IPR014721">
    <property type="entry name" value="Ribsml_uS5_D2-typ_fold_subgr"/>
</dbReference>
<dbReference type="InterPro" id="IPR000100">
    <property type="entry name" value="RNase_P"/>
</dbReference>
<dbReference type="InterPro" id="IPR020539">
    <property type="entry name" value="RNase_P_CS"/>
</dbReference>
<dbReference type="NCBIfam" id="TIGR00188">
    <property type="entry name" value="rnpA"/>
    <property type="match status" value="1"/>
</dbReference>
<dbReference type="PANTHER" id="PTHR33992">
    <property type="entry name" value="RIBONUCLEASE P PROTEIN COMPONENT"/>
    <property type="match status" value="1"/>
</dbReference>
<dbReference type="PANTHER" id="PTHR33992:SF1">
    <property type="entry name" value="RIBONUCLEASE P PROTEIN COMPONENT"/>
    <property type="match status" value="1"/>
</dbReference>
<dbReference type="Pfam" id="PF00825">
    <property type="entry name" value="Ribonuclease_P"/>
    <property type="match status" value="1"/>
</dbReference>
<dbReference type="SUPFAM" id="SSF54211">
    <property type="entry name" value="Ribosomal protein S5 domain 2-like"/>
    <property type="match status" value="1"/>
</dbReference>
<dbReference type="PROSITE" id="PS00648">
    <property type="entry name" value="RIBONUCLEASE_P"/>
    <property type="match status" value="1"/>
</dbReference>
<protein>
    <recommendedName>
        <fullName evidence="1">Ribonuclease P protein component</fullName>
        <shortName evidence="1">RNase P protein</shortName>
        <shortName evidence="1">RNaseP protein</shortName>
        <ecNumber evidence="1">3.1.26.5</ecNumber>
    </recommendedName>
    <alternativeName>
        <fullName evidence="1">Protein C5</fullName>
    </alternativeName>
</protein>
<gene>
    <name evidence="1" type="primary">rnpA</name>
    <name type="ordered locus">ECUMN_4235</name>
</gene>
<comment type="function">
    <text evidence="1">RNaseP catalyzes the removal of the 5'-leader sequence from pre-tRNA to produce the mature 5'-terminus. It can also cleave other RNA substrates such as 4.5S RNA. The protein component plays an auxiliary but essential role in vivo by binding to the 5'-leader sequence and broadening the substrate specificity of the ribozyme.</text>
</comment>
<comment type="catalytic activity">
    <reaction evidence="1">
        <text>Endonucleolytic cleavage of RNA, removing 5'-extranucleotides from tRNA precursor.</text>
        <dbReference type="EC" id="3.1.26.5"/>
    </reaction>
</comment>
<comment type="subunit">
    <text evidence="1">Consists of a catalytic RNA component (M1 or rnpB) and a protein subunit.</text>
</comment>
<comment type="similarity">
    <text evidence="1">Belongs to the RnpA family.</text>
</comment>
<proteinExistence type="inferred from homology"/>
<reference key="1">
    <citation type="journal article" date="2009" name="PLoS Genet.">
        <title>Organised genome dynamics in the Escherichia coli species results in highly diverse adaptive paths.</title>
        <authorList>
            <person name="Touchon M."/>
            <person name="Hoede C."/>
            <person name="Tenaillon O."/>
            <person name="Barbe V."/>
            <person name="Baeriswyl S."/>
            <person name="Bidet P."/>
            <person name="Bingen E."/>
            <person name="Bonacorsi S."/>
            <person name="Bouchier C."/>
            <person name="Bouvet O."/>
            <person name="Calteau A."/>
            <person name="Chiapello H."/>
            <person name="Clermont O."/>
            <person name="Cruveiller S."/>
            <person name="Danchin A."/>
            <person name="Diard M."/>
            <person name="Dossat C."/>
            <person name="Karoui M.E."/>
            <person name="Frapy E."/>
            <person name="Garry L."/>
            <person name="Ghigo J.M."/>
            <person name="Gilles A.M."/>
            <person name="Johnson J."/>
            <person name="Le Bouguenec C."/>
            <person name="Lescat M."/>
            <person name="Mangenot S."/>
            <person name="Martinez-Jehanne V."/>
            <person name="Matic I."/>
            <person name="Nassif X."/>
            <person name="Oztas S."/>
            <person name="Petit M.A."/>
            <person name="Pichon C."/>
            <person name="Rouy Z."/>
            <person name="Ruf C.S."/>
            <person name="Schneider D."/>
            <person name="Tourret J."/>
            <person name="Vacherie B."/>
            <person name="Vallenet D."/>
            <person name="Medigue C."/>
            <person name="Rocha E.P.C."/>
            <person name="Denamur E."/>
        </authorList>
    </citation>
    <scope>NUCLEOTIDE SEQUENCE [LARGE SCALE GENOMIC DNA]</scope>
    <source>
        <strain>UMN026 / ExPEC</strain>
    </source>
</reference>
<feature type="chain" id="PRO_1000194638" description="Ribonuclease P protein component">
    <location>
        <begin position="1"/>
        <end position="119"/>
    </location>
</feature>
<name>RNPA_ECOLU</name>
<keyword id="KW-0255">Endonuclease</keyword>
<keyword id="KW-0378">Hydrolase</keyword>
<keyword id="KW-0540">Nuclease</keyword>
<keyword id="KW-0694">RNA-binding</keyword>
<keyword id="KW-0819">tRNA processing</keyword>
<evidence type="ECO:0000255" key="1">
    <source>
        <dbReference type="HAMAP-Rule" id="MF_00227"/>
    </source>
</evidence>
<accession>B7NF21</accession>
<organism>
    <name type="scientific">Escherichia coli O17:K52:H18 (strain UMN026 / ExPEC)</name>
    <dbReference type="NCBI Taxonomy" id="585056"/>
    <lineage>
        <taxon>Bacteria</taxon>
        <taxon>Pseudomonadati</taxon>
        <taxon>Pseudomonadota</taxon>
        <taxon>Gammaproteobacteria</taxon>
        <taxon>Enterobacterales</taxon>
        <taxon>Enterobacteriaceae</taxon>
        <taxon>Escherichia</taxon>
    </lineage>
</organism>
<sequence>MVKLAFPRELRLLTPSQFTFVFQQPQRAGTPQITILGRLNSLGHPRIGLTVAKKNVRRAHERNRIKRLTRESFRLRQHELPAMDFVVVAKKGVADLDNRALSEALEKLWRRHCRLARGS</sequence>